<sequence length="777" mass="83695">MRNHRTSIFVVLSLVIILNGQSGFLPRAGAESKVHIVYLGEKQHDDPEFVTESHHRMLWSLLGSKEEAHGSMVHSFRHGFSGFAAKLTESQAKKIADLPEVVHVIPDRFYKPATTRTWDYLGLSPTNPKNLLNQTNMGEQMIIGIIDSGVWPESEVFNDNEIGPVPSHWKGGCESGEDFNSSHCNKKLIGAKYFINAFLATHESFNSSESLDFISPRGYNGHGTHVATIAGGSYVPNTSYKGLAGGTVRGGAPRARIAVYKTCWYLDLDIAACSSADILKAMDEAIHDGVDVLSLSLGFEPLYPETDVRDGIATGAFHAVLKGITVVCAAGNAGPAAQTVGNTAPWILTVAATTLDRSFVTPMTLGNNKVILGQAIYTGTEVGFTSLVYPENPGNSNESFSGTCERLLINSNRTMAGKVVLCFTESPYSISVTRAAHYVKRAGGLGVIIAGQPGNVLRPCLDDFPCVAVDYELGTYILFYIRSNGSPVVKIQPSRTLIGQPVGTKVASFSSRGPNPISAAILKPDIAAPGVSILAATTTNTTFNDRGFIFLSGTSMATPTISGIVALLKALHPDWSPAAIRSAIVTTAWRTDPFGEQIFAEGSPRKPADPFDYGGGLVNPEKATKPGLVYDLGLEDYVLYMCSVGYNETSISQLVGKGTVCSYPKPSVLDFNLPSITIPNLKEEVTLPRTLTNVGPLESVYRVAVEPPLGTQVTVTPETLVFNSTTKRVSFKVSVSTTHKINTGYYFGSLTWSDSLHNVTIPLSVRTQLLPYYYDEN</sequence>
<accession>Q9SZY2</accession>
<accession>Q9ZSA9</accession>
<comment type="subcellular location">
    <subcellularLocation>
        <location evidence="2">Secreted</location>
    </subcellularLocation>
</comment>
<comment type="similarity">
    <text evidence="8">Belongs to the peptidase S8 family.</text>
</comment>
<comment type="sequence caution" evidence="8">
    <conflict type="erroneous gene model prediction">
        <sequence resource="EMBL-CDS" id="AAD03438"/>
    </conflict>
</comment>
<comment type="sequence caution" evidence="8">
    <conflict type="erroneous gene model prediction">
        <sequence resource="EMBL-CDS" id="AEE82892"/>
    </conflict>
</comment>
<evidence type="ECO:0000250" key="1">
    <source>
        <dbReference type="UniProtKB" id="Q39547"/>
    </source>
</evidence>
<evidence type="ECO:0000250" key="2">
    <source>
        <dbReference type="UniProtKB" id="Q84WS0"/>
    </source>
</evidence>
<evidence type="ECO:0000255" key="3"/>
<evidence type="ECO:0000255" key="4">
    <source>
        <dbReference type="PROSITE-ProRule" id="PRU00498"/>
    </source>
</evidence>
<evidence type="ECO:0000255" key="5">
    <source>
        <dbReference type="PROSITE-ProRule" id="PRU01240"/>
    </source>
</evidence>
<evidence type="ECO:0000255" key="6">
    <source>
        <dbReference type="PROSITE-ProRule" id="PRU10082"/>
    </source>
</evidence>
<evidence type="ECO:0000303" key="7">
    <source>
    </source>
</evidence>
<evidence type="ECO:0000305" key="8"/>
<evidence type="ECO:0000312" key="9">
    <source>
        <dbReference type="Araport" id="AT4G10510"/>
    </source>
</evidence>
<evidence type="ECO:0000312" key="10">
    <source>
        <dbReference type="EMBL" id="AAD03438.1"/>
    </source>
</evidence>
<evidence type="ECO:0000312" key="11">
    <source>
        <dbReference type="EMBL" id="CAB40044.1"/>
    </source>
</evidence>
<name>SBT37_ARATH</name>
<dbReference type="EC" id="3.4.21.-" evidence="6"/>
<dbReference type="EMBL" id="AF118222">
    <property type="protein sequence ID" value="AAD03438.1"/>
    <property type="status" value="ALT_SEQ"/>
    <property type="molecule type" value="Genomic_DNA"/>
</dbReference>
<dbReference type="EMBL" id="AL049524">
    <property type="protein sequence ID" value="CAB40044.1"/>
    <property type="molecule type" value="Genomic_DNA"/>
</dbReference>
<dbReference type="EMBL" id="AL161517">
    <property type="protein sequence ID" value="CAB78174.1"/>
    <property type="molecule type" value="Genomic_DNA"/>
</dbReference>
<dbReference type="EMBL" id="CP002687">
    <property type="protein sequence ID" value="AEE82892.1"/>
    <property type="status" value="ALT_SEQ"/>
    <property type="molecule type" value="Genomic_DNA"/>
</dbReference>
<dbReference type="EMBL" id="CP002687">
    <property type="protein sequence ID" value="ANM66249.1"/>
    <property type="molecule type" value="Genomic_DNA"/>
</dbReference>
<dbReference type="PIR" id="T04186">
    <property type="entry name" value="T04186"/>
</dbReference>
<dbReference type="RefSeq" id="NP_001328158.1">
    <property type="nucleotide sequence ID" value="NM_001340673.1"/>
</dbReference>
<dbReference type="RefSeq" id="NP_567358.1">
    <property type="nucleotide sequence ID" value="NM_117119.2"/>
</dbReference>
<dbReference type="SMR" id="Q9SZY2"/>
<dbReference type="FunCoup" id="Q9SZY2">
    <property type="interactions" value="2"/>
</dbReference>
<dbReference type="STRING" id="3702.Q9SZY2"/>
<dbReference type="MEROPS" id="S08.A49"/>
<dbReference type="GlyCosmos" id="Q9SZY2">
    <property type="glycosylation" value="10 sites, No reported glycans"/>
</dbReference>
<dbReference type="GlyGen" id="Q9SZY2">
    <property type="glycosylation" value="10 sites"/>
</dbReference>
<dbReference type="PaxDb" id="3702-AT4G10510.1"/>
<dbReference type="EnsemblPlants" id="AT4G10510.3">
    <property type="protein sequence ID" value="AT4G10510.3"/>
    <property type="gene ID" value="AT4G10510"/>
</dbReference>
<dbReference type="GeneID" id="826643"/>
<dbReference type="Gramene" id="AT4G10510.3">
    <property type="protein sequence ID" value="AT4G10510.3"/>
    <property type="gene ID" value="AT4G10510"/>
</dbReference>
<dbReference type="KEGG" id="ath:AT4G10510"/>
<dbReference type="Araport" id="AT4G10510"/>
<dbReference type="TAIR" id="AT4G10510"/>
<dbReference type="eggNOG" id="ENOG502QSF0">
    <property type="taxonomic scope" value="Eukaryota"/>
</dbReference>
<dbReference type="HOGENOM" id="CLU_000625_4_2_1"/>
<dbReference type="InParanoid" id="Q9SZY2"/>
<dbReference type="PRO" id="PR:Q9SZY2"/>
<dbReference type="Proteomes" id="UP000006548">
    <property type="component" value="Chromosome 4"/>
</dbReference>
<dbReference type="ExpressionAtlas" id="Q9SZY2">
    <property type="expression patterns" value="baseline and differential"/>
</dbReference>
<dbReference type="GO" id="GO:0005576">
    <property type="term" value="C:extracellular region"/>
    <property type="evidence" value="ECO:0007669"/>
    <property type="project" value="UniProtKB-SubCell"/>
</dbReference>
<dbReference type="GO" id="GO:0004252">
    <property type="term" value="F:serine-type endopeptidase activity"/>
    <property type="evidence" value="ECO:0007669"/>
    <property type="project" value="InterPro"/>
</dbReference>
<dbReference type="GO" id="GO:0006508">
    <property type="term" value="P:proteolysis"/>
    <property type="evidence" value="ECO:0007669"/>
    <property type="project" value="UniProtKB-KW"/>
</dbReference>
<dbReference type="CDD" id="cd02120">
    <property type="entry name" value="PA_subtilisin_like"/>
    <property type="match status" value="1"/>
</dbReference>
<dbReference type="CDD" id="cd04852">
    <property type="entry name" value="Peptidases_S8_3"/>
    <property type="match status" value="1"/>
</dbReference>
<dbReference type="FunFam" id="2.60.40.2310:FF:000001">
    <property type="entry name" value="Subtilisin-like protease SBT1.5"/>
    <property type="match status" value="1"/>
</dbReference>
<dbReference type="FunFam" id="3.40.50.200:FF:000006">
    <property type="entry name" value="Subtilisin-like protease SBT1.5"/>
    <property type="match status" value="1"/>
</dbReference>
<dbReference type="FunFam" id="3.50.30.30:FF:000005">
    <property type="entry name" value="subtilisin-like protease SBT1.5"/>
    <property type="match status" value="1"/>
</dbReference>
<dbReference type="FunFam" id="3.30.70.80:FF:000002">
    <property type="entry name" value="Subtilisin-like protease SBT5.3"/>
    <property type="match status" value="1"/>
</dbReference>
<dbReference type="Gene3D" id="2.60.40.2310">
    <property type="match status" value="1"/>
</dbReference>
<dbReference type="Gene3D" id="3.50.30.30">
    <property type="match status" value="1"/>
</dbReference>
<dbReference type="Gene3D" id="3.30.70.80">
    <property type="entry name" value="Peptidase S8 propeptide/proteinase inhibitor I9"/>
    <property type="match status" value="1"/>
</dbReference>
<dbReference type="Gene3D" id="3.40.50.200">
    <property type="entry name" value="Peptidase S8/S53 domain"/>
    <property type="match status" value="1"/>
</dbReference>
<dbReference type="InterPro" id="IPR000209">
    <property type="entry name" value="Peptidase_S8/S53_dom"/>
</dbReference>
<dbReference type="InterPro" id="IPR036852">
    <property type="entry name" value="Peptidase_S8/S53_dom_sf"/>
</dbReference>
<dbReference type="InterPro" id="IPR023828">
    <property type="entry name" value="Peptidase_S8_Ser-AS"/>
</dbReference>
<dbReference type="InterPro" id="IPR015500">
    <property type="entry name" value="Peptidase_S8_subtilisin-rel"/>
</dbReference>
<dbReference type="InterPro" id="IPR034197">
    <property type="entry name" value="Peptidases_S8_3"/>
</dbReference>
<dbReference type="InterPro" id="IPR010259">
    <property type="entry name" value="S8pro/Inhibitor_I9"/>
</dbReference>
<dbReference type="InterPro" id="IPR037045">
    <property type="entry name" value="S8pro/Inhibitor_I9_sf"/>
</dbReference>
<dbReference type="InterPro" id="IPR045051">
    <property type="entry name" value="SBT"/>
</dbReference>
<dbReference type="InterPro" id="IPR041469">
    <property type="entry name" value="Subtilisin-like_FN3"/>
</dbReference>
<dbReference type="PANTHER" id="PTHR10795">
    <property type="entry name" value="PROPROTEIN CONVERTASE SUBTILISIN/KEXIN"/>
    <property type="match status" value="1"/>
</dbReference>
<dbReference type="Pfam" id="PF17766">
    <property type="entry name" value="fn3_6"/>
    <property type="match status" value="1"/>
</dbReference>
<dbReference type="Pfam" id="PF05922">
    <property type="entry name" value="Inhibitor_I9"/>
    <property type="match status" value="1"/>
</dbReference>
<dbReference type="Pfam" id="PF00082">
    <property type="entry name" value="Peptidase_S8"/>
    <property type="match status" value="1"/>
</dbReference>
<dbReference type="PRINTS" id="PR00723">
    <property type="entry name" value="SUBTILISIN"/>
</dbReference>
<dbReference type="SUPFAM" id="SSF52743">
    <property type="entry name" value="Subtilisin-like"/>
    <property type="match status" value="1"/>
</dbReference>
<dbReference type="PROSITE" id="PS51892">
    <property type="entry name" value="SUBTILASE"/>
    <property type="match status" value="1"/>
</dbReference>
<dbReference type="PROSITE" id="PS00138">
    <property type="entry name" value="SUBTILASE_SER"/>
    <property type="match status" value="1"/>
</dbReference>
<reference key="1">
    <citation type="journal article" date="1999" name="Nature">
        <title>Sequence and analysis of chromosome 4 of the plant Arabidopsis thaliana.</title>
        <authorList>
            <person name="Mayer K.F.X."/>
            <person name="Schueller C."/>
            <person name="Wambutt R."/>
            <person name="Murphy G."/>
            <person name="Volckaert G."/>
            <person name="Pohl T."/>
            <person name="Duesterhoeft A."/>
            <person name="Stiekema W."/>
            <person name="Entian K.-D."/>
            <person name="Terryn N."/>
            <person name="Harris B."/>
            <person name="Ansorge W."/>
            <person name="Brandt P."/>
            <person name="Grivell L.A."/>
            <person name="Rieger M."/>
            <person name="Weichselgartner M."/>
            <person name="de Simone V."/>
            <person name="Obermaier B."/>
            <person name="Mache R."/>
            <person name="Mueller M."/>
            <person name="Kreis M."/>
            <person name="Delseny M."/>
            <person name="Puigdomenech P."/>
            <person name="Watson M."/>
            <person name="Schmidtheini T."/>
            <person name="Reichert B."/>
            <person name="Portetelle D."/>
            <person name="Perez-Alonso M."/>
            <person name="Boutry M."/>
            <person name="Bancroft I."/>
            <person name="Vos P."/>
            <person name="Hoheisel J."/>
            <person name="Zimmermann W."/>
            <person name="Wedler H."/>
            <person name="Ridley P."/>
            <person name="Langham S.-A."/>
            <person name="McCullagh B."/>
            <person name="Bilham L."/>
            <person name="Robben J."/>
            <person name="van der Schueren J."/>
            <person name="Grymonprez B."/>
            <person name="Chuang Y.-J."/>
            <person name="Vandenbussche F."/>
            <person name="Braeken M."/>
            <person name="Weltjens I."/>
            <person name="Voet M."/>
            <person name="Bastiaens I."/>
            <person name="Aert R."/>
            <person name="Defoor E."/>
            <person name="Weitzenegger T."/>
            <person name="Bothe G."/>
            <person name="Ramsperger U."/>
            <person name="Hilbert H."/>
            <person name="Braun M."/>
            <person name="Holzer E."/>
            <person name="Brandt A."/>
            <person name="Peters S."/>
            <person name="van Staveren M."/>
            <person name="Dirkse W."/>
            <person name="Mooijman P."/>
            <person name="Klein Lankhorst R."/>
            <person name="Rose M."/>
            <person name="Hauf J."/>
            <person name="Koetter P."/>
            <person name="Berneiser S."/>
            <person name="Hempel S."/>
            <person name="Feldpausch M."/>
            <person name="Lamberth S."/>
            <person name="Van den Daele H."/>
            <person name="De Keyser A."/>
            <person name="Buysshaert C."/>
            <person name="Gielen J."/>
            <person name="Villarroel R."/>
            <person name="De Clercq R."/>
            <person name="van Montagu M."/>
            <person name="Rogers J."/>
            <person name="Cronin A."/>
            <person name="Quail M.A."/>
            <person name="Bray-Allen S."/>
            <person name="Clark L."/>
            <person name="Doggett J."/>
            <person name="Hall S."/>
            <person name="Kay M."/>
            <person name="Lennard N."/>
            <person name="McLay K."/>
            <person name="Mayes R."/>
            <person name="Pettett A."/>
            <person name="Rajandream M.A."/>
            <person name="Lyne M."/>
            <person name="Benes V."/>
            <person name="Rechmann S."/>
            <person name="Borkova D."/>
            <person name="Bloecker H."/>
            <person name="Scharfe M."/>
            <person name="Grimm M."/>
            <person name="Loehnert T.-H."/>
            <person name="Dose S."/>
            <person name="de Haan M."/>
            <person name="Maarse A.C."/>
            <person name="Schaefer M."/>
            <person name="Mueller-Auer S."/>
            <person name="Gabel C."/>
            <person name="Fuchs M."/>
            <person name="Fartmann B."/>
            <person name="Granderath K."/>
            <person name="Dauner D."/>
            <person name="Herzl A."/>
            <person name="Neumann S."/>
            <person name="Argiriou A."/>
            <person name="Vitale D."/>
            <person name="Liguori R."/>
            <person name="Piravandi E."/>
            <person name="Massenet O."/>
            <person name="Quigley F."/>
            <person name="Clabauld G."/>
            <person name="Muendlein A."/>
            <person name="Felber R."/>
            <person name="Schnabl S."/>
            <person name="Hiller R."/>
            <person name="Schmidt W."/>
            <person name="Lecharny A."/>
            <person name="Aubourg S."/>
            <person name="Chefdor F."/>
            <person name="Cooke R."/>
            <person name="Berger C."/>
            <person name="Monfort A."/>
            <person name="Casacuberta E."/>
            <person name="Gibbons T."/>
            <person name="Weber N."/>
            <person name="Vandenbol M."/>
            <person name="Bargues M."/>
            <person name="Terol J."/>
            <person name="Torres A."/>
            <person name="Perez-Perez A."/>
            <person name="Purnelle B."/>
            <person name="Bent E."/>
            <person name="Johnson S."/>
            <person name="Tacon D."/>
            <person name="Jesse T."/>
            <person name="Heijnen L."/>
            <person name="Schwarz S."/>
            <person name="Scholler P."/>
            <person name="Heber S."/>
            <person name="Francs P."/>
            <person name="Bielke C."/>
            <person name="Frishman D."/>
            <person name="Haase D."/>
            <person name="Lemcke K."/>
            <person name="Mewes H.-W."/>
            <person name="Stocker S."/>
            <person name="Zaccaria P."/>
            <person name="Bevan M."/>
            <person name="Wilson R.K."/>
            <person name="de la Bastide M."/>
            <person name="Habermann K."/>
            <person name="Parnell L."/>
            <person name="Dedhia N."/>
            <person name="Gnoj L."/>
            <person name="Schutz K."/>
            <person name="Huang E."/>
            <person name="Spiegel L."/>
            <person name="Sekhon M."/>
            <person name="Murray J."/>
            <person name="Sheet P."/>
            <person name="Cordes M."/>
            <person name="Abu-Threideh J."/>
            <person name="Stoneking T."/>
            <person name="Kalicki J."/>
            <person name="Graves T."/>
            <person name="Harmon G."/>
            <person name="Edwards J."/>
            <person name="Latreille P."/>
            <person name="Courtney L."/>
            <person name="Cloud J."/>
            <person name="Abbott A."/>
            <person name="Scott K."/>
            <person name="Johnson D."/>
            <person name="Minx P."/>
            <person name="Bentley D."/>
            <person name="Fulton B."/>
            <person name="Miller N."/>
            <person name="Greco T."/>
            <person name="Kemp K."/>
            <person name="Kramer J."/>
            <person name="Fulton L."/>
            <person name="Mardis E."/>
            <person name="Dante M."/>
            <person name="Pepin K."/>
            <person name="Hillier L.W."/>
            <person name="Nelson J."/>
            <person name="Spieth J."/>
            <person name="Ryan E."/>
            <person name="Andrews S."/>
            <person name="Geisel C."/>
            <person name="Layman D."/>
            <person name="Du H."/>
            <person name="Ali J."/>
            <person name="Berghoff A."/>
            <person name="Jones K."/>
            <person name="Drone K."/>
            <person name="Cotton M."/>
            <person name="Joshu C."/>
            <person name="Antonoiu B."/>
            <person name="Zidanic M."/>
            <person name="Strong C."/>
            <person name="Sun H."/>
            <person name="Lamar B."/>
            <person name="Yordan C."/>
            <person name="Ma P."/>
            <person name="Zhong J."/>
            <person name="Preston R."/>
            <person name="Vil D."/>
            <person name="Shekher M."/>
            <person name="Matero A."/>
            <person name="Shah R."/>
            <person name="Swaby I.K."/>
            <person name="O'Shaughnessy A."/>
            <person name="Rodriguez M."/>
            <person name="Hoffman J."/>
            <person name="Till S."/>
            <person name="Granat S."/>
            <person name="Shohdy N."/>
            <person name="Hasegawa A."/>
            <person name="Hameed A."/>
            <person name="Lodhi M."/>
            <person name="Johnson A."/>
            <person name="Chen E."/>
            <person name="Marra M.A."/>
            <person name="Martienssen R."/>
            <person name="McCombie W.R."/>
        </authorList>
    </citation>
    <scope>NUCLEOTIDE SEQUENCE [LARGE SCALE GENOMIC DNA]</scope>
    <source>
        <strain>cv. Columbia</strain>
    </source>
</reference>
<reference key="2">
    <citation type="journal article" date="2017" name="Plant J.">
        <title>Araport11: a complete reannotation of the Arabidopsis thaliana reference genome.</title>
        <authorList>
            <person name="Cheng C.Y."/>
            <person name="Krishnakumar V."/>
            <person name="Chan A.P."/>
            <person name="Thibaud-Nissen F."/>
            <person name="Schobel S."/>
            <person name="Town C.D."/>
        </authorList>
    </citation>
    <scope>GENOME REANNOTATION</scope>
    <source>
        <strain>cv. Columbia</strain>
    </source>
</reference>
<reference key="3">
    <citation type="journal article" date="2005" name="PLoS Comput. Biol.">
        <title>Inferring hypotheses on functional relationships of genes: Analysis of the Arabidopsis thaliana subtilase gene family.</title>
        <authorList>
            <person name="Rautengarten C."/>
            <person name="Steinhauser D."/>
            <person name="Bussis D."/>
            <person name="Stintzi A."/>
            <person name="Schaller A."/>
            <person name="Kopka J."/>
            <person name="Altmann T."/>
        </authorList>
    </citation>
    <scope>GENE FAMILY</scope>
    <scope>NOMENCLATURE</scope>
</reference>
<organism>
    <name type="scientific">Arabidopsis thaliana</name>
    <name type="common">Mouse-ear cress</name>
    <dbReference type="NCBI Taxonomy" id="3702"/>
    <lineage>
        <taxon>Eukaryota</taxon>
        <taxon>Viridiplantae</taxon>
        <taxon>Streptophyta</taxon>
        <taxon>Embryophyta</taxon>
        <taxon>Tracheophyta</taxon>
        <taxon>Spermatophyta</taxon>
        <taxon>Magnoliopsida</taxon>
        <taxon>eudicotyledons</taxon>
        <taxon>Gunneridae</taxon>
        <taxon>Pentapetalae</taxon>
        <taxon>rosids</taxon>
        <taxon>malvids</taxon>
        <taxon>Brassicales</taxon>
        <taxon>Brassicaceae</taxon>
        <taxon>Camelineae</taxon>
        <taxon>Arabidopsis</taxon>
    </lineage>
</organism>
<gene>
    <name evidence="7" type="primary">SBT3.7</name>
    <name evidence="9" type="ordered locus">At4g10510</name>
    <name evidence="10" type="ORF">F3H7.15</name>
    <name evidence="11" type="ORF">F7L13.90</name>
</gene>
<feature type="signal peptide" evidence="3">
    <location>
        <begin position="1"/>
        <end position="22"/>
    </location>
</feature>
<feature type="propeptide" id="PRO_0000435197" description="Activation peptide" evidence="1">
    <location>
        <begin position="23"/>
        <end position="113"/>
    </location>
</feature>
<feature type="chain" id="PRO_0000435198" description="Subtilisin-like protease SBT3.7">
    <location>
        <begin position="114"/>
        <end status="unknown"/>
    </location>
</feature>
<feature type="propeptide" id="PRO_0000435199" evidence="1">
    <location>
        <begin status="unknown"/>
        <end position="777"/>
    </location>
</feature>
<feature type="domain" description="Inhibitor I9" evidence="3">
    <location>
        <begin position="34"/>
        <end position="111"/>
    </location>
</feature>
<feature type="domain" description="Peptidase S8" evidence="5">
    <location>
        <begin position="117"/>
        <end position="624"/>
    </location>
</feature>
<feature type="domain" description="PA" evidence="3">
    <location>
        <begin position="386"/>
        <end position="481"/>
    </location>
</feature>
<feature type="active site" description="Charge relay system" evidence="5">
    <location>
        <position position="147"/>
    </location>
</feature>
<feature type="active site" description="Charge relay system" evidence="5">
    <location>
        <position position="222"/>
    </location>
</feature>
<feature type="active site" description="Charge relay system" evidence="5">
    <location>
        <position position="555"/>
    </location>
</feature>
<feature type="glycosylation site" description="N-linked (GlcNAc...) asparagine" evidence="4">
    <location>
        <position position="133"/>
    </location>
</feature>
<feature type="glycosylation site" description="N-linked (GlcNAc...) asparagine" evidence="4">
    <location>
        <position position="180"/>
    </location>
</feature>
<feature type="glycosylation site" description="N-linked (GlcNAc...) asparagine" evidence="4">
    <location>
        <position position="206"/>
    </location>
</feature>
<feature type="glycosylation site" description="N-linked (GlcNAc...) asparagine" evidence="4">
    <location>
        <position position="237"/>
    </location>
</feature>
<feature type="glycosylation site" description="N-linked (GlcNAc...) asparagine" evidence="4">
    <location>
        <position position="397"/>
    </location>
</feature>
<feature type="glycosylation site" description="N-linked (GlcNAc...) asparagine" evidence="4">
    <location>
        <position position="412"/>
    </location>
</feature>
<feature type="glycosylation site" description="N-linked (GlcNAc...) asparagine" evidence="4">
    <location>
        <position position="540"/>
    </location>
</feature>
<feature type="glycosylation site" description="N-linked (GlcNAc...) asparagine" evidence="4">
    <location>
        <position position="647"/>
    </location>
</feature>
<feature type="glycosylation site" description="N-linked (GlcNAc...) asparagine" evidence="4">
    <location>
        <position position="723"/>
    </location>
</feature>
<feature type="glycosylation site" description="N-linked (GlcNAc...) asparagine" evidence="4">
    <location>
        <position position="758"/>
    </location>
</feature>
<keyword id="KW-0068">Autocatalytic cleavage</keyword>
<keyword id="KW-0325">Glycoprotein</keyword>
<keyword id="KW-0378">Hydrolase</keyword>
<keyword id="KW-0645">Protease</keyword>
<keyword id="KW-1185">Reference proteome</keyword>
<keyword id="KW-0964">Secreted</keyword>
<keyword id="KW-0720">Serine protease</keyword>
<keyword id="KW-0732">Signal</keyword>
<keyword id="KW-0865">Zymogen</keyword>
<protein>
    <recommendedName>
        <fullName evidence="7">Subtilisin-like protease SBT3.7</fullName>
        <ecNumber evidence="6">3.4.21.-</ecNumber>
    </recommendedName>
    <alternativeName>
        <fullName evidence="7">Subtilase subfamily 3 member 7</fullName>
        <shortName evidence="7">AtSBT3.7</shortName>
    </alternativeName>
</protein>
<proteinExistence type="inferred from homology"/>